<dbReference type="EC" id="1.1.1.17" evidence="1"/>
<dbReference type="EMBL" id="CP001022">
    <property type="protein sequence ID" value="ACB61171.1"/>
    <property type="molecule type" value="Genomic_DNA"/>
</dbReference>
<dbReference type="RefSeq" id="WP_012370589.1">
    <property type="nucleotide sequence ID" value="NC_010556.1"/>
</dbReference>
<dbReference type="SMR" id="B1YHJ8"/>
<dbReference type="STRING" id="262543.Exig_1718"/>
<dbReference type="KEGG" id="esi:Exig_1718"/>
<dbReference type="eggNOG" id="COG0246">
    <property type="taxonomic scope" value="Bacteria"/>
</dbReference>
<dbReference type="HOGENOM" id="CLU_036089_2_0_9"/>
<dbReference type="OrthoDB" id="271711at2"/>
<dbReference type="Proteomes" id="UP000001681">
    <property type="component" value="Chromosome"/>
</dbReference>
<dbReference type="GO" id="GO:0005829">
    <property type="term" value="C:cytosol"/>
    <property type="evidence" value="ECO:0007669"/>
    <property type="project" value="TreeGrafter"/>
</dbReference>
<dbReference type="GO" id="GO:0008926">
    <property type="term" value="F:mannitol-1-phosphate 5-dehydrogenase activity"/>
    <property type="evidence" value="ECO:0007669"/>
    <property type="project" value="UniProtKB-UniRule"/>
</dbReference>
<dbReference type="GO" id="GO:0019592">
    <property type="term" value="P:mannitol catabolic process"/>
    <property type="evidence" value="ECO:0007669"/>
    <property type="project" value="TreeGrafter"/>
</dbReference>
<dbReference type="Gene3D" id="1.10.1040.10">
    <property type="entry name" value="N-(1-d-carboxylethyl)-l-norvaline Dehydrogenase, domain 2"/>
    <property type="match status" value="1"/>
</dbReference>
<dbReference type="Gene3D" id="3.40.50.720">
    <property type="entry name" value="NAD(P)-binding Rossmann-like Domain"/>
    <property type="match status" value="1"/>
</dbReference>
<dbReference type="HAMAP" id="MF_00196">
    <property type="entry name" value="Mannitol_dehydrog"/>
    <property type="match status" value="1"/>
</dbReference>
<dbReference type="InterPro" id="IPR008927">
    <property type="entry name" value="6-PGluconate_DH-like_C_sf"/>
</dbReference>
<dbReference type="InterPro" id="IPR013328">
    <property type="entry name" value="6PGD_dom2"/>
</dbReference>
<dbReference type="InterPro" id="IPR023028">
    <property type="entry name" value="Mannitol_1_phos_5_DH"/>
</dbReference>
<dbReference type="InterPro" id="IPR000669">
    <property type="entry name" value="Mannitol_DH"/>
</dbReference>
<dbReference type="InterPro" id="IPR013118">
    <property type="entry name" value="Mannitol_DH_C"/>
</dbReference>
<dbReference type="InterPro" id="IPR023027">
    <property type="entry name" value="Mannitol_DH_CS"/>
</dbReference>
<dbReference type="InterPro" id="IPR013131">
    <property type="entry name" value="Mannitol_DH_N"/>
</dbReference>
<dbReference type="InterPro" id="IPR036291">
    <property type="entry name" value="NAD(P)-bd_dom_sf"/>
</dbReference>
<dbReference type="NCBIfam" id="NF002646">
    <property type="entry name" value="PRK02318.1-2"/>
    <property type="match status" value="1"/>
</dbReference>
<dbReference type="NCBIfam" id="NF002647">
    <property type="entry name" value="PRK02318.1-3"/>
    <property type="match status" value="1"/>
</dbReference>
<dbReference type="NCBIfam" id="NF002652">
    <property type="entry name" value="PRK02318.2-5"/>
    <property type="match status" value="1"/>
</dbReference>
<dbReference type="PANTHER" id="PTHR30524:SF0">
    <property type="entry name" value="ALTRONATE OXIDOREDUCTASE-RELATED"/>
    <property type="match status" value="1"/>
</dbReference>
<dbReference type="PANTHER" id="PTHR30524">
    <property type="entry name" value="MANNITOL-1-PHOSPHATE 5-DEHYDROGENASE"/>
    <property type="match status" value="1"/>
</dbReference>
<dbReference type="Pfam" id="PF01232">
    <property type="entry name" value="Mannitol_dh"/>
    <property type="match status" value="1"/>
</dbReference>
<dbReference type="Pfam" id="PF08125">
    <property type="entry name" value="Mannitol_dh_C"/>
    <property type="match status" value="1"/>
</dbReference>
<dbReference type="PRINTS" id="PR00084">
    <property type="entry name" value="MTLDHDRGNASE"/>
</dbReference>
<dbReference type="SUPFAM" id="SSF48179">
    <property type="entry name" value="6-phosphogluconate dehydrogenase C-terminal domain-like"/>
    <property type="match status" value="1"/>
</dbReference>
<dbReference type="SUPFAM" id="SSF51735">
    <property type="entry name" value="NAD(P)-binding Rossmann-fold domains"/>
    <property type="match status" value="1"/>
</dbReference>
<dbReference type="PROSITE" id="PS00974">
    <property type="entry name" value="MANNITOL_DHGENASE"/>
    <property type="match status" value="1"/>
</dbReference>
<reference key="1">
    <citation type="submission" date="2008-04" db="EMBL/GenBank/DDBJ databases">
        <title>Complete sequence of chromosome of Exiguobacterium sibiricum 255-15.</title>
        <authorList>
            <consortium name="US DOE Joint Genome Institute"/>
            <person name="Copeland A."/>
            <person name="Lucas S."/>
            <person name="Lapidus A."/>
            <person name="Glavina del Rio T."/>
            <person name="Dalin E."/>
            <person name="Tice H."/>
            <person name="Bruce D."/>
            <person name="Goodwin L."/>
            <person name="Pitluck S."/>
            <person name="Kiss H."/>
            <person name="Chertkov O."/>
            <person name="Monk C."/>
            <person name="Brettin T."/>
            <person name="Detter J.C."/>
            <person name="Han C."/>
            <person name="Kuske C.R."/>
            <person name="Schmutz J."/>
            <person name="Larimer F."/>
            <person name="Land M."/>
            <person name="Hauser L."/>
            <person name="Kyrpides N."/>
            <person name="Mikhailova N."/>
            <person name="Vishnivetskaya T."/>
            <person name="Rodrigues D.F."/>
            <person name="Gilichinsky D."/>
            <person name="Tiedje J."/>
            <person name="Richardson P."/>
        </authorList>
    </citation>
    <scope>NUCLEOTIDE SEQUENCE [LARGE SCALE GENOMIC DNA]</scope>
    <source>
        <strain>DSM 17290 / CCUG 55495 / CIP 109462 / JCM 13490 / 255-15</strain>
    </source>
</reference>
<gene>
    <name evidence="1" type="primary">mtlD</name>
    <name type="ordered locus">Exig_1718</name>
</gene>
<protein>
    <recommendedName>
        <fullName evidence="1">Mannitol-1-phosphate 5-dehydrogenase</fullName>
        <ecNumber evidence="1">1.1.1.17</ecNumber>
    </recommendedName>
</protein>
<keyword id="KW-0520">NAD</keyword>
<keyword id="KW-0560">Oxidoreductase</keyword>
<keyword id="KW-1185">Reference proteome</keyword>
<organism>
    <name type="scientific">Exiguobacterium sibiricum (strain DSM 17290 / CCUG 55495 / CIP 109462 / JCM 13490 / 255-15)</name>
    <dbReference type="NCBI Taxonomy" id="262543"/>
    <lineage>
        <taxon>Bacteria</taxon>
        <taxon>Bacillati</taxon>
        <taxon>Bacillota</taxon>
        <taxon>Bacilli</taxon>
        <taxon>Bacillales</taxon>
        <taxon>Bacillales Family XII. Incertae Sedis</taxon>
        <taxon>Exiguobacterium</taxon>
    </lineage>
</organism>
<accession>B1YHJ8</accession>
<comment type="catalytic activity">
    <reaction evidence="1">
        <text>D-mannitol 1-phosphate + NAD(+) = beta-D-fructose 6-phosphate + NADH + H(+)</text>
        <dbReference type="Rhea" id="RHEA:19661"/>
        <dbReference type="ChEBI" id="CHEBI:15378"/>
        <dbReference type="ChEBI" id="CHEBI:57540"/>
        <dbReference type="ChEBI" id="CHEBI:57634"/>
        <dbReference type="ChEBI" id="CHEBI:57945"/>
        <dbReference type="ChEBI" id="CHEBI:61381"/>
        <dbReference type="EC" id="1.1.1.17"/>
    </reaction>
</comment>
<comment type="similarity">
    <text evidence="1">Belongs to the mannitol dehydrogenase family.</text>
</comment>
<name>MTLD_EXIS2</name>
<feature type="chain" id="PRO_1000099193" description="Mannitol-1-phosphate 5-dehydrogenase">
    <location>
        <begin position="1"/>
        <end position="381"/>
    </location>
</feature>
<feature type="binding site" evidence="1">
    <location>
        <begin position="3"/>
        <end position="14"/>
    </location>
    <ligand>
        <name>NAD(+)</name>
        <dbReference type="ChEBI" id="CHEBI:57540"/>
    </ligand>
</feature>
<evidence type="ECO:0000255" key="1">
    <source>
        <dbReference type="HAMAP-Rule" id="MF_00196"/>
    </source>
</evidence>
<proteinExistence type="inferred from homology"/>
<sequence>MKAVHFGAGNIGRGFIGLQLVKSGYDVCFIDVNAEVVEALKTRGAYTVGYAAEEAAVEEVSRVTALNSQTEAERVVEAIATADVVTTAVGPTLLARIAPLLAEGLKQRTTTQNVFVIACENMIEGSSHLQQEVMHYLESTPGNVFFPNAAVDRIVPLQHHEDPLYVEVEPFFEWVIETKALPDDYPVFEGVTYVADITPFIERKLFTVNTGHAIASYLGALFGKETIAESLQDVRVRRGVQSALYETGWLLLEKYGFDPKDHSAYIQKNIKRFENPRIHDEIVRVARSPIRKLGPRDRLVKPARELMDRGIEANGLALGIAAALTYSDPNYSEYSELNTFIEQNGIQETVATYLGLEADERLSQLIVSQYEQMHPMSDSIA</sequence>